<dbReference type="EC" id="3.4.25.2" evidence="1"/>
<dbReference type="EMBL" id="CP001127">
    <property type="protein sequence ID" value="ACF92084.1"/>
    <property type="molecule type" value="Genomic_DNA"/>
</dbReference>
<dbReference type="RefSeq" id="WP_000208240.1">
    <property type="nucleotide sequence ID" value="NC_011094.1"/>
</dbReference>
<dbReference type="SMR" id="B4TPV3"/>
<dbReference type="MEROPS" id="T01.006"/>
<dbReference type="KEGG" id="sew:SeSA_A4308"/>
<dbReference type="HOGENOM" id="CLU_093872_1_0_6"/>
<dbReference type="Proteomes" id="UP000001865">
    <property type="component" value="Chromosome"/>
</dbReference>
<dbReference type="GO" id="GO:0009376">
    <property type="term" value="C:HslUV protease complex"/>
    <property type="evidence" value="ECO:0007669"/>
    <property type="project" value="UniProtKB-UniRule"/>
</dbReference>
<dbReference type="GO" id="GO:0005839">
    <property type="term" value="C:proteasome core complex"/>
    <property type="evidence" value="ECO:0007669"/>
    <property type="project" value="InterPro"/>
</dbReference>
<dbReference type="GO" id="GO:0046872">
    <property type="term" value="F:metal ion binding"/>
    <property type="evidence" value="ECO:0007669"/>
    <property type="project" value="UniProtKB-KW"/>
</dbReference>
<dbReference type="GO" id="GO:0004298">
    <property type="term" value="F:threonine-type endopeptidase activity"/>
    <property type="evidence" value="ECO:0007669"/>
    <property type="project" value="UniProtKB-KW"/>
</dbReference>
<dbReference type="GO" id="GO:0051603">
    <property type="term" value="P:proteolysis involved in protein catabolic process"/>
    <property type="evidence" value="ECO:0007669"/>
    <property type="project" value="InterPro"/>
</dbReference>
<dbReference type="CDD" id="cd01913">
    <property type="entry name" value="protease_HslV"/>
    <property type="match status" value="1"/>
</dbReference>
<dbReference type="FunFam" id="3.60.20.10:FF:000002">
    <property type="entry name" value="ATP-dependent protease subunit HslV"/>
    <property type="match status" value="1"/>
</dbReference>
<dbReference type="Gene3D" id="3.60.20.10">
    <property type="entry name" value="Glutamine Phosphoribosylpyrophosphate, subunit 1, domain 1"/>
    <property type="match status" value="1"/>
</dbReference>
<dbReference type="HAMAP" id="MF_00248">
    <property type="entry name" value="HslV"/>
    <property type="match status" value="1"/>
</dbReference>
<dbReference type="InterPro" id="IPR022281">
    <property type="entry name" value="ATP-dep_Prtase_HsIV_su"/>
</dbReference>
<dbReference type="InterPro" id="IPR029055">
    <property type="entry name" value="Ntn_hydrolases_N"/>
</dbReference>
<dbReference type="InterPro" id="IPR001353">
    <property type="entry name" value="Proteasome_sua/b"/>
</dbReference>
<dbReference type="InterPro" id="IPR023333">
    <property type="entry name" value="Proteasome_suB-type"/>
</dbReference>
<dbReference type="NCBIfam" id="TIGR03692">
    <property type="entry name" value="ATP_dep_HslV"/>
    <property type="match status" value="1"/>
</dbReference>
<dbReference type="NCBIfam" id="NF003964">
    <property type="entry name" value="PRK05456.1"/>
    <property type="match status" value="1"/>
</dbReference>
<dbReference type="PANTHER" id="PTHR32194:SF0">
    <property type="entry name" value="ATP-DEPENDENT PROTEASE SUBUNIT HSLV"/>
    <property type="match status" value="1"/>
</dbReference>
<dbReference type="PANTHER" id="PTHR32194">
    <property type="entry name" value="METALLOPROTEASE TLDD"/>
    <property type="match status" value="1"/>
</dbReference>
<dbReference type="Pfam" id="PF00227">
    <property type="entry name" value="Proteasome"/>
    <property type="match status" value="1"/>
</dbReference>
<dbReference type="PIRSF" id="PIRSF039093">
    <property type="entry name" value="HslV"/>
    <property type="match status" value="1"/>
</dbReference>
<dbReference type="SUPFAM" id="SSF56235">
    <property type="entry name" value="N-terminal nucleophile aminohydrolases (Ntn hydrolases)"/>
    <property type="match status" value="1"/>
</dbReference>
<dbReference type="PROSITE" id="PS51476">
    <property type="entry name" value="PROTEASOME_BETA_2"/>
    <property type="match status" value="1"/>
</dbReference>
<proteinExistence type="inferred from homology"/>
<sequence>MTTIVSVRRNGHVVIAGDGQATLGNTVMKGNVKKVRRLYNDKVIAGFAGGTADAFTLFELFERKLEMHQGHLVKAAVELAKDWRTDRMLRKLEALLAVADETASLIITGNGDVVQPENDLIAIGSGGPYAQAAARALLENTELGAREIAEKALDIAGDICIYTNHFHTIEELTAKA</sequence>
<organism>
    <name type="scientific">Salmonella schwarzengrund (strain CVM19633)</name>
    <dbReference type="NCBI Taxonomy" id="439843"/>
    <lineage>
        <taxon>Bacteria</taxon>
        <taxon>Pseudomonadati</taxon>
        <taxon>Pseudomonadota</taxon>
        <taxon>Gammaproteobacteria</taxon>
        <taxon>Enterobacterales</taxon>
        <taxon>Enterobacteriaceae</taxon>
        <taxon>Salmonella</taxon>
    </lineage>
</organism>
<reference key="1">
    <citation type="journal article" date="2011" name="J. Bacteriol.">
        <title>Comparative genomics of 28 Salmonella enterica isolates: evidence for CRISPR-mediated adaptive sublineage evolution.</title>
        <authorList>
            <person name="Fricke W.F."/>
            <person name="Mammel M.K."/>
            <person name="McDermott P.F."/>
            <person name="Tartera C."/>
            <person name="White D.G."/>
            <person name="Leclerc J.E."/>
            <person name="Ravel J."/>
            <person name="Cebula T.A."/>
        </authorList>
    </citation>
    <scope>NUCLEOTIDE SEQUENCE [LARGE SCALE GENOMIC DNA]</scope>
    <source>
        <strain>CVM19633</strain>
    </source>
</reference>
<protein>
    <recommendedName>
        <fullName evidence="1">ATP-dependent protease subunit HslV</fullName>
        <ecNumber evidence="1">3.4.25.2</ecNumber>
    </recommendedName>
    <alternativeName>
        <fullName evidence="1">Heat shock protein HslV</fullName>
    </alternativeName>
</protein>
<keyword id="KW-0021">Allosteric enzyme</keyword>
<keyword id="KW-0963">Cytoplasm</keyword>
<keyword id="KW-0378">Hydrolase</keyword>
<keyword id="KW-0479">Metal-binding</keyword>
<keyword id="KW-0645">Protease</keyword>
<keyword id="KW-0915">Sodium</keyword>
<keyword id="KW-0346">Stress response</keyword>
<keyword id="KW-0888">Threonine protease</keyword>
<accession>B4TPV3</accession>
<evidence type="ECO:0000255" key="1">
    <source>
        <dbReference type="HAMAP-Rule" id="MF_00248"/>
    </source>
</evidence>
<comment type="function">
    <text evidence="1">Protease subunit of a proteasome-like degradation complex believed to be a general protein degrading machinery.</text>
</comment>
<comment type="catalytic activity">
    <reaction evidence="1">
        <text>ATP-dependent cleavage of peptide bonds with broad specificity.</text>
        <dbReference type="EC" id="3.4.25.2"/>
    </reaction>
</comment>
<comment type="activity regulation">
    <text evidence="1">Allosterically activated by HslU binding.</text>
</comment>
<comment type="subunit">
    <text evidence="1">A double ring-shaped homohexamer of HslV is capped on each side by a ring-shaped HslU homohexamer. The assembly of the HslU/HslV complex is dependent on binding of ATP.</text>
</comment>
<comment type="subcellular location">
    <subcellularLocation>
        <location evidence="1">Cytoplasm</location>
    </subcellularLocation>
</comment>
<comment type="induction">
    <text evidence="1">By heat shock.</text>
</comment>
<comment type="similarity">
    <text evidence="1">Belongs to the peptidase T1B family. HslV subfamily.</text>
</comment>
<feature type="chain" id="PRO_1000100915" description="ATP-dependent protease subunit HslV">
    <location>
        <begin position="1"/>
        <end position="176"/>
    </location>
</feature>
<feature type="active site" evidence="1">
    <location>
        <position position="2"/>
    </location>
</feature>
<feature type="binding site" evidence="1">
    <location>
        <position position="157"/>
    </location>
    <ligand>
        <name>Na(+)</name>
        <dbReference type="ChEBI" id="CHEBI:29101"/>
    </ligand>
</feature>
<feature type="binding site" evidence="1">
    <location>
        <position position="160"/>
    </location>
    <ligand>
        <name>Na(+)</name>
        <dbReference type="ChEBI" id="CHEBI:29101"/>
    </ligand>
</feature>
<feature type="binding site" evidence="1">
    <location>
        <position position="163"/>
    </location>
    <ligand>
        <name>Na(+)</name>
        <dbReference type="ChEBI" id="CHEBI:29101"/>
    </ligand>
</feature>
<name>HSLV_SALSV</name>
<gene>
    <name evidence="1" type="primary">hslV</name>
    <name type="ordered locus">SeSA_A4308</name>
</gene>